<name>TRAM_RHIRD</name>
<gene>
    <name type="primary">traM</name>
</gene>
<feature type="chain" id="PRO_0000065607" description="Transcriptional repressor TraM">
    <location>
        <begin position="1"/>
        <end position="102"/>
    </location>
</feature>
<feature type="strand" evidence="2">
    <location>
        <begin position="3"/>
        <end position="5"/>
    </location>
</feature>
<feature type="helix" evidence="1">
    <location>
        <begin position="16"/>
        <end position="21"/>
    </location>
</feature>
<feature type="helix" evidence="1">
    <location>
        <begin position="26"/>
        <end position="52"/>
    </location>
</feature>
<feature type="helix" evidence="1">
    <location>
        <begin position="56"/>
        <end position="59"/>
    </location>
</feature>
<feature type="helix" evidence="1">
    <location>
        <begin position="67"/>
        <end position="93"/>
    </location>
</feature>
<protein>
    <recommendedName>
        <fullName>Transcriptional repressor TraM</fullName>
    </recommendedName>
</protein>
<geneLocation type="plasmid">
    <name>pTiA6NC</name>
</geneLocation>
<sequence>MELEDANVTKKVELRPLIGLTRGLPPTDLETITIDAIRTHRRLVEKADELFQALPETYKTGQACGGPQHIRYIEASIEMHAQMSALNTLYSILGFIPKVVVN</sequence>
<organism>
    <name type="scientific">Rhizobium radiobacter</name>
    <name type="common">Agrobacterium tumefaciens</name>
    <name type="synonym">Agrobacterium radiobacter</name>
    <dbReference type="NCBI Taxonomy" id="358"/>
    <lineage>
        <taxon>Bacteria</taxon>
        <taxon>Pseudomonadati</taxon>
        <taxon>Pseudomonadota</taxon>
        <taxon>Alphaproteobacteria</taxon>
        <taxon>Hyphomicrobiales</taxon>
        <taxon>Rhizobiaceae</taxon>
        <taxon>Rhizobium/Agrobacterium group</taxon>
        <taxon>Agrobacterium</taxon>
        <taxon>Agrobacterium tumefaciens complex</taxon>
    </lineage>
</organism>
<reference key="1">
    <citation type="journal article" date="1995" name="J. Bacteriol.">
        <title>Activity of the Agrobacterium Ti plasmid conjugal transfer regulator TraR is inhibited by the product of the traM gene.</title>
        <authorList>
            <person name="Fuqua C."/>
            <person name="Burbea M."/>
            <person name="Winans S.C."/>
        </authorList>
    </citation>
    <scope>NUCLEOTIDE SEQUENCE [GENOMIC DNA]</scope>
</reference>
<comment type="function">
    <text>Negatively regulates conjugation and the expression of tra genes by antagonizing TraR/AAI-dependent activation. TraM may either bind or modify TraR or AAI making them unavailable. Alternatively, TraM may bind tra promoters preventing TraR activation.</text>
</comment>
<evidence type="ECO:0007829" key="1">
    <source>
        <dbReference type="PDB" id="1RFY"/>
    </source>
</evidence>
<evidence type="ECO:0007829" key="2">
    <source>
        <dbReference type="PDB" id="1US6"/>
    </source>
</evidence>
<keyword id="KW-0002">3D-structure</keyword>
<keyword id="KW-0184">Conjugation</keyword>
<keyword id="KW-0614">Plasmid</keyword>
<keyword id="KW-0678">Repressor</keyword>
<keyword id="KW-0804">Transcription</keyword>
<keyword id="KW-0805">Transcription regulation</keyword>
<accession>Q57471</accession>
<dbReference type="EMBL" id="AF242881">
    <property type="protein sequence ID" value="AAC28120.1"/>
    <property type="molecule type" value="Genomic_DNA"/>
</dbReference>
<dbReference type="EMBL" id="U16786">
    <property type="protein sequence ID" value="AAA64838.1"/>
    <property type="molecule type" value="Genomic_DNA"/>
</dbReference>
<dbReference type="PIR" id="I39703">
    <property type="entry name" value="I39703"/>
</dbReference>
<dbReference type="RefSeq" id="NP_059700.1">
    <property type="nucleotide sequence ID" value="NC_002377.1"/>
</dbReference>
<dbReference type="RefSeq" id="WP_010892388.1">
    <property type="nucleotide sequence ID" value="NC_002377.1"/>
</dbReference>
<dbReference type="PDB" id="1RFY">
    <property type="method" value="X-ray"/>
    <property type="resolution" value="1.60 A"/>
    <property type="chains" value="A/B=1-102"/>
</dbReference>
<dbReference type="PDB" id="1UPG">
    <property type="method" value="X-ray"/>
    <property type="resolution" value="1.80 A"/>
    <property type="chains" value="A/B=1-102"/>
</dbReference>
<dbReference type="PDB" id="1US6">
    <property type="method" value="X-ray"/>
    <property type="resolution" value="1.65 A"/>
    <property type="chains" value="A/B=1-102"/>
</dbReference>
<dbReference type="PDBsum" id="1RFY"/>
<dbReference type="PDBsum" id="1UPG"/>
<dbReference type="PDBsum" id="1US6"/>
<dbReference type="SMR" id="Q57471"/>
<dbReference type="EvolutionaryTrace" id="Q57471"/>
<dbReference type="GO" id="GO:0045892">
    <property type="term" value="P:negative regulation of DNA-templated transcription"/>
    <property type="evidence" value="ECO:0007669"/>
    <property type="project" value="InterPro"/>
</dbReference>
<dbReference type="Gene3D" id="1.10.287.160">
    <property type="entry name" value="HR1 repeat"/>
    <property type="match status" value="1"/>
</dbReference>
<dbReference type="InterPro" id="IPR015309">
    <property type="entry name" value="Tscrpt_rep_TraM"/>
</dbReference>
<dbReference type="InterPro" id="IPR036336">
    <property type="entry name" value="Tscrpt_rep_TraM_sf"/>
</dbReference>
<dbReference type="Pfam" id="PF09228">
    <property type="entry name" value="Prok-TraM"/>
    <property type="match status" value="1"/>
</dbReference>
<dbReference type="PIRSF" id="PIRSF017930">
    <property type="entry name" value="Transcript_repress_TraM"/>
    <property type="match status" value="1"/>
</dbReference>
<dbReference type="SUPFAM" id="SSF109631">
    <property type="entry name" value="Transcriptional repressor TraM"/>
    <property type="match status" value="1"/>
</dbReference>
<proteinExistence type="evidence at protein level"/>